<dbReference type="EC" id="2.1.3.3"/>
<dbReference type="EMBL" id="AF282249">
    <property type="protein sequence ID" value="AAF86986.1"/>
    <property type="molecule type" value="Genomic_DNA"/>
</dbReference>
<dbReference type="SMR" id="P0C2U1"/>
<dbReference type="UniPathway" id="UPA00254">
    <property type="reaction ID" value="UER00365"/>
</dbReference>
<dbReference type="GO" id="GO:0005737">
    <property type="term" value="C:cytoplasm"/>
    <property type="evidence" value="ECO:0007669"/>
    <property type="project" value="UniProtKB-SubCell"/>
</dbReference>
<dbReference type="GO" id="GO:0016597">
    <property type="term" value="F:amino acid binding"/>
    <property type="evidence" value="ECO:0007669"/>
    <property type="project" value="InterPro"/>
</dbReference>
<dbReference type="GO" id="GO:0004585">
    <property type="term" value="F:ornithine carbamoyltransferase activity"/>
    <property type="evidence" value="ECO:0007669"/>
    <property type="project" value="UniProtKB-UniRule"/>
</dbReference>
<dbReference type="GO" id="GO:0042450">
    <property type="term" value="P:arginine biosynthetic process via ornithine"/>
    <property type="evidence" value="ECO:0007669"/>
    <property type="project" value="TreeGrafter"/>
</dbReference>
<dbReference type="GO" id="GO:0019547">
    <property type="term" value="P:arginine catabolic process to ornithine"/>
    <property type="evidence" value="ECO:0007669"/>
    <property type="project" value="UniProtKB-UniPathway"/>
</dbReference>
<dbReference type="GO" id="GO:0019240">
    <property type="term" value="P:citrulline biosynthetic process"/>
    <property type="evidence" value="ECO:0007669"/>
    <property type="project" value="TreeGrafter"/>
</dbReference>
<dbReference type="Gene3D" id="3.40.50.1370">
    <property type="entry name" value="Aspartate/ornithine carbamoyltransferase"/>
    <property type="match status" value="2"/>
</dbReference>
<dbReference type="HAMAP" id="MF_01109">
    <property type="entry name" value="OTCase"/>
    <property type="match status" value="1"/>
</dbReference>
<dbReference type="InterPro" id="IPR006132">
    <property type="entry name" value="Asp/Orn_carbamoyltranf_P-bd"/>
</dbReference>
<dbReference type="InterPro" id="IPR006130">
    <property type="entry name" value="Asp/Orn_carbamoylTrfase"/>
</dbReference>
<dbReference type="InterPro" id="IPR036901">
    <property type="entry name" value="Asp/Orn_carbamoylTrfase_sf"/>
</dbReference>
<dbReference type="InterPro" id="IPR006131">
    <property type="entry name" value="Asp_carbamoyltransf_Asp/Orn-bd"/>
</dbReference>
<dbReference type="InterPro" id="IPR002292">
    <property type="entry name" value="Orn/put_carbamltrans"/>
</dbReference>
<dbReference type="InterPro" id="IPR024904">
    <property type="entry name" value="OTCase_ArgI"/>
</dbReference>
<dbReference type="NCBIfam" id="TIGR00658">
    <property type="entry name" value="orni_carb_tr"/>
    <property type="match status" value="1"/>
</dbReference>
<dbReference type="PANTHER" id="PTHR45753:SF1">
    <property type="entry name" value="ORNITHINE CARBAMOYLTRANSFERASE, CATABOLIC"/>
    <property type="match status" value="1"/>
</dbReference>
<dbReference type="PANTHER" id="PTHR45753">
    <property type="entry name" value="ORNITHINE CARBAMOYLTRANSFERASE, MITOCHONDRIAL"/>
    <property type="match status" value="1"/>
</dbReference>
<dbReference type="Pfam" id="PF00185">
    <property type="entry name" value="OTCace"/>
    <property type="match status" value="1"/>
</dbReference>
<dbReference type="Pfam" id="PF02729">
    <property type="entry name" value="OTCace_N"/>
    <property type="match status" value="1"/>
</dbReference>
<dbReference type="PRINTS" id="PR00100">
    <property type="entry name" value="AOTCASE"/>
</dbReference>
<dbReference type="PRINTS" id="PR00102">
    <property type="entry name" value="OTCASE"/>
</dbReference>
<dbReference type="SUPFAM" id="SSF53671">
    <property type="entry name" value="Aspartate/ornithine carbamoyltransferase"/>
    <property type="match status" value="1"/>
</dbReference>
<dbReference type="PROSITE" id="PS00097">
    <property type="entry name" value="CARBAMOYLTRANSFERASE"/>
    <property type="match status" value="1"/>
</dbReference>
<gene>
    <name type="primary">arcB</name>
    <name type="ordered locus">LL2036</name>
</gene>
<keyword id="KW-0056">Arginine metabolism</keyword>
<keyword id="KW-0963">Cytoplasm</keyword>
<keyword id="KW-0808">Transferase</keyword>
<reference key="1">
    <citation type="submission" date="2000-06" db="EMBL/GenBank/DDBJ databases">
        <title>Arginine metabolism in Lactococcus lactis ssp. lactis ML3: analysis of gene structure and study of expression profiles using the small-scale DNA array.</title>
        <authorList>
            <person name="Chou L."/>
            <person name="Weimer B."/>
            <person name="Xie Y."/>
        </authorList>
    </citation>
    <scope>NUCLEOTIDE SEQUENCE [GENOMIC DNA]</scope>
    <source>
        <strain>NCDO 763 / ML3</strain>
    </source>
</reference>
<feature type="chain" id="PRO_0000285242" description="Ornithine carbamoyltransferase, catabolic">
    <location>
        <begin position="1"/>
        <end position="354"/>
    </location>
</feature>
<feature type="binding site" evidence="2">
    <location>
        <begin position="67"/>
        <end position="70"/>
    </location>
    <ligand>
        <name>carbamoyl phosphate</name>
        <dbReference type="ChEBI" id="CHEBI:58228"/>
    </ligand>
</feature>
<feature type="binding site" evidence="2">
    <location>
        <position position="94"/>
    </location>
    <ligand>
        <name>carbamoyl phosphate</name>
        <dbReference type="ChEBI" id="CHEBI:58228"/>
    </ligand>
</feature>
<feature type="binding site" evidence="2">
    <location>
        <position position="118"/>
    </location>
    <ligand>
        <name>carbamoyl phosphate</name>
        <dbReference type="ChEBI" id="CHEBI:58228"/>
    </ligand>
</feature>
<feature type="binding site" evidence="2">
    <location>
        <begin position="145"/>
        <end position="148"/>
    </location>
    <ligand>
        <name>carbamoyl phosphate</name>
        <dbReference type="ChEBI" id="CHEBI:58228"/>
    </ligand>
</feature>
<feature type="binding site" evidence="2">
    <location>
        <position position="177"/>
    </location>
    <ligand>
        <name>L-ornithine</name>
        <dbReference type="ChEBI" id="CHEBI:46911"/>
    </ligand>
</feature>
<feature type="binding site" evidence="2">
    <location>
        <position position="241"/>
    </location>
    <ligand>
        <name>L-ornithine</name>
        <dbReference type="ChEBI" id="CHEBI:46911"/>
    </ligand>
</feature>
<feature type="binding site" evidence="2">
    <location>
        <begin position="245"/>
        <end position="246"/>
    </location>
    <ligand>
        <name>L-ornithine</name>
        <dbReference type="ChEBI" id="CHEBI:46911"/>
    </ligand>
</feature>
<feature type="binding site" evidence="2">
    <location>
        <begin position="284"/>
        <end position="285"/>
    </location>
    <ligand>
        <name>carbamoyl phosphate</name>
        <dbReference type="ChEBI" id="CHEBI:58228"/>
    </ligand>
</feature>
<feature type="binding site" evidence="2">
    <location>
        <position position="329"/>
    </location>
    <ligand>
        <name>carbamoyl phosphate</name>
        <dbReference type="ChEBI" id="CHEBI:58228"/>
    </ligand>
</feature>
<protein>
    <recommendedName>
        <fullName>Ornithine carbamoyltransferase, catabolic</fullName>
        <shortName>OTCase</shortName>
        <ecNumber>2.1.3.3</ecNumber>
    </recommendedName>
</protein>
<accession>P0C2U1</accession>
<accession>Q9CE14</accession>
<accession>Q9KGV4</accession>
<name>OTCC_LACLC</name>
<sequence>MTSPLITKAEVNSVFQGRSLLAEKDFTPAEINYLVDFGLHLKALKQQNIPHHYLEGKNIALLFAKTSTRTRAAFTTAAIDLGAHPEYLGANDIQLGIKESTEDTARVLGSMFDAIERRGFSQKEVEDLAKYSGVPVWNGLTDDWHPTQMIADFMTVKENFGYLKGLTLVYVGDGRNNMANSLIVTGSMLGVNVHIVAPDSLHPSKEVMDIANKFAEKSGAKPLATSNIEEGVKGANIIYSDVWVSMGESNWEERVKLLTPYRITMDMLKMTGNADNGKLIFMHCLPAFHDTETEYGKEIKEKYGLTEMEVTDAVFRSKYARQFEEAENRMHSIKAIMAATLGNLFIPAVPEDFK</sequence>
<organism>
    <name type="scientific">Lactococcus lactis subsp. cremoris</name>
    <name type="common">Streptococcus cremoris</name>
    <dbReference type="NCBI Taxonomy" id="1359"/>
    <lineage>
        <taxon>Bacteria</taxon>
        <taxon>Bacillati</taxon>
        <taxon>Bacillota</taxon>
        <taxon>Bacilli</taxon>
        <taxon>Lactobacillales</taxon>
        <taxon>Streptococcaceae</taxon>
        <taxon>Lactococcus</taxon>
    </lineage>
</organism>
<comment type="function">
    <text evidence="1">Reversibly catalyzes the transfer of the carbamoyl group from carbamoyl phosphate (CP) to the N(epsilon) atom of ornithine (ORN) to produce L-citrulline.</text>
</comment>
<comment type="catalytic activity">
    <reaction>
        <text>carbamoyl phosphate + L-ornithine = L-citrulline + phosphate + H(+)</text>
        <dbReference type="Rhea" id="RHEA:19513"/>
        <dbReference type="ChEBI" id="CHEBI:15378"/>
        <dbReference type="ChEBI" id="CHEBI:43474"/>
        <dbReference type="ChEBI" id="CHEBI:46911"/>
        <dbReference type="ChEBI" id="CHEBI:57743"/>
        <dbReference type="ChEBI" id="CHEBI:58228"/>
        <dbReference type="EC" id="2.1.3.3"/>
    </reaction>
</comment>
<comment type="pathway">
    <text>Amino-acid degradation; L-arginine degradation via ADI pathway; carbamoyl phosphate from L-arginine: step 2/2.</text>
</comment>
<comment type="subcellular location">
    <subcellularLocation>
        <location evidence="1">Cytoplasm</location>
    </subcellularLocation>
</comment>
<comment type="similarity">
    <text evidence="3">Belongs to the aspartate/ornithine carbamoyltransferase superfamily. OTCase family.</text>
</comment>
<evidence type="ECO:0000250" key="1"/>
<evidence type="ECO:0000255" key="2">
    <source>
        <dbReference type="HAMAP-Rule" id="MF_01109"/>
    </source>
</evidence>
<evidence type="ECO:0000305" key="3"/>
<proteinExistence type="inferred from homology"/>